<keyword id="KW-1003">Cell membrane</keyword>
<keyword id="KW-0472">Membrane</keyword>
<keyword id="KW-1185">Reference proteome</keyword>
<keyword id="KW-0812">Transmembrane</keyword>
<keyword id="KW-1133">Transmembrane helix</keyword>
<keyword id="KW-0813">Transport</keyword>
<name>ECFT_CLOK5</name>
<feature type="chain" id="PRO_0000408987" description="Energy-coupling factor transporter transmembrane protein EcfT">
    <location>
        <begin position="1"/>
        <end position="270"/>
    </location>
</feature>
<feature type="transmembrane region" description="Helical" evidence="1">
    <location>
        <begin position="36"/>
        <end position="56"/>
    </location>
</feature>
<feature type="transmembrane region" description="Helical" evidence="1">
    <location>
        <begin position="72"/>
        <end position="92"/>
    </location>
</feature>
<feature type="transmembrane region" description="Helical" evidence="1">
    <location>
        <begin position="108"/>
        <end position="128"/>
    </location>
</feature>
<feature type="transmembrane region" description="Helical" evidence="1">
    <location>
        <begin position="248"/>
        <end position="268"/>
    </location>
</feature>
<reference key="1">
    <citation type="journal article" date="2008" name="Proc. Natl. Acad. Sci. U.S.A.">
        <title>The genome of Clostridium kluyveri, a strict anaerobe with unique metabolic features.</title>
        <authorList>
            <person name="Seedorf H."/>
            <person name="Fricke W.F."/>
            <person name="Veith B."/>
            <person name="Brueggemann H."/>
            <person name="Liesegang H."/>
            <person name="Strittmatter A."/>
            <person name="Miethke M."/>
            <person name="Buckel W."/>
            <person name="Hinderberger J."/>
            <person name="Li F."/>
            <person name="Hagemeier C."/>
            <person name="Thauer R.K."/>
            <person name="Gottschalk G."/>
        </authorList>
    </citation>
    <scope>NUCLEOTIDE SEQUENCE [LARGE SCALE GENOMIC DNA]</scope>
    <source>
        <strain>ATCC 8527 / DSM 555 / NBRC 12016 / NCIMB 10680 / K1</strain>
    </source>
</reference>
<comment type="function">
    <text evidence="1">Transmembrane (T) component of an energy-coupling factor (ECF) ABC-transporter complex. Unlike classic ABC transporters this ECF transporter provides the energy necessary to transport a number of different substrates.</text>
</comment>
<comment type="subunit">
    <text evidence="1">Forms a stable energy-coupling factor (ECF) transporter complex composed of 2 membrane-embedded substrate-binding proteins (S component), 2 ATP-binding proteins (A component) and 2 transmembrane proteins (T component). May be able to interact with more than 1 S component at a time (By similarity).</text>
</comment>
<comment type="subcellular location">
    <subcellularLocation>
        <location evidence="1">Cell membrane</location>
        <topology evidence="1">Multi-pass membrane protein</topology>
    </subcellularLocation>
</comment>
<comment type="similarity">
    <text evidence="1">Belongs to the energy-coupling factor EcfT family.</text>
</comment>
<evidence type="ECO:0000255" key="1">
    <source>
        <dbReference type="HAMAP-Rule" id="MF_01461"/>
    </source>
</evidence>
<accession>A5N4S9</accession>
<protein>
    <recommendedName>
        <fullName evidence="1">Energy-coupling factor transporter transmembrane protein EcfT</fullName>
        <shortName evidence="1">ECF transporter T component EcfT</shortName>
    </recommendedName>
</protein>
<organism>
    <name type="scientific">Clostridium kluyveri (strain ATCC 8527 / DSM 555 / NBRC 12016 / NCIMB 10680 / K1)</name>
    <dbReference type="NCBI Taxonomy" id="431943"/>
    <lineage>
        <taxon>Bacteria</taxon>
        <taxon>Bacillati</taxon>
        <taxon>Bacillota</taxon>
        <taxon>Clostridia</taxon>
        <taxon>Eubacteriales</taxon>
        <taxon>Clostridiaceae</taxon>
        <taxon>Clostridium</taxon>
    </lineage>
</organism>
<proteinExistence type="inferred from homology"/>
<sequence>MIKDITIGQYVPGDSFIHKLDPRVKILISLIYIVDLFIVNSFKGYIFIVVFTLISILVSKVQFTYIYKGLKPIFILVLITAVLNIFMTGGANPPLFKWKFLVVYREGLIMAAFMALRLVFLIIGTSLLTLTTSPIELTDGIEKLLKPVSKIGVPSHELAMMMTIALRFIPTLMDETDKIMKAQIARGADLESGNLIQKAKNLVPILVPLFISSFRRADELAMAMEARCYRGGDGRTRMKELKLSNRDFIASLCALVLVCISILSRIWWGK</sequence>
<dbReference type="EMBL" id="CP000673">
    <property type="protein sequence ID" value="EDK32310.1"/>
    <property type="molecule type" value="Genomic_DNA"/>
</dbReference>
<dbReference type="RefSeq" id="WP_011988835.1">
    <property type="nucleotide sequence ID" value="NC_009706.1"/>
</dbReference>
<dbReference type="SMR" id="A5N4S9"/>
<dbReference type="STRING" id="431943.CKL_0256"/>
<dbReference type="KEGG" id="ckl:CKL_0256"/>
<dbReference type="eggNOG" id="COG0619">
    <property type="taxonomic scope" value="Bacteria"/>
</dbReference>
<dbReference type="HOGENOM" id="CLU_056469_2_2_9"/>
<dbReference type="Proteomes" id="UP000002411">
    <property type="component" value="Chromosome"/>
</dbReference>
<dbReference type="GO" id="GO:0005886">
    <property type="term" value="C:plasma membrane"/>
    <property type="evidence" value="ECO:0007669"/>
    <property type="project" value="UniProtKB-SubCell"/>
</dbReference>
<dbReference type="GO" id="GO:0022857">
    <property type="term" value="F:transmembrane transporter activity"/>
    <property type="evidence" value="ECO:0007669"/>
    <property type="project" value="UniProtKB-UniRule"/>
</dbReference>
<dbReference type="CDD" id="cd16914">
    <property type="entry name" value="EcfT"/>
    <property type="match status" value="1"/>
</dbReference>
<dbReference type="HAMAP" id="MF_01461">
    <property type="entry name" value="EcfT"/>
    <property type="match status" value="1"/>
</dbReference>
<dbReference type="InterPro" id="IPR003339">
    <property type="entry name" value="ABC/ECF_trnsptr_transmembrane"/>
</dbReference>
<dbReference type="InterPro" id="IPR051611">
    <property type="entry name" value="ECF_transporter_component"/>
</dbReference>
<dbReference type="InterPro" id="IPR024919">
    <property type="entry name" value="EcfT"/>
</dbReference>
<dbReference type="PANTHER" id="PTHR34857">
    <property type="entry name" value="SLL0384 PROTEIN"/>
    <property type="match status" value="1"/>
</dbReference>
<dbReference type="PANTHER" id="PTHR34857:SF2">
    <property type="entry name" value="SLL0384 PROTEIN"/>
    <property type="match status" value="1"/>
</dbReference>
<dbReference type="Pfam" id="PF02361">
    <property type="entry name" value="CbiQ"/>
    <property type="match status" value="1"/>
</dbReference>
<gene>
    <name evidence="1" type="primary">ecfT</name>
    <name type="ordered locus">CKL_0256</name>
</gene>